<keyword id="KW-0143">Chaperone</keyword>
<keyword id="KW-0963">Cytoplasm</keyword>
<keyword id="KW-0342">GTP-binding</keyword>
<keyword id="KW-0996">Nickel insertion</keyword>
<keyword id="KW-0547">Nucleotide-binding</keyword>
<keyword id="KW-1185">Reference proteome</keyword>
<accession>B1XYX6</accession>
<comment type="function">
    <text evidence="1">Facilitates the functional incorporation of the urease nickel metallocenter. This process requires GTP hydrolysis, probably effectuated by UreG.</text>
</comment>
<comment type="subunit">
    <text evidence="1">Homodimer. UreD, UreF and UreG form a complex that acts as a GTP-hydrolysis-dependent molecular chaperone, activating the urease apoprotein by helping to assemble the nickel containing metallocenter of UreC. The UreE protein probably delivers the nickel.</text>
</comment>
<comment type="subcellular location">
    <subcellularLocation>
        <location evidence="1">Cytoplasm</location>
    </subcellularLocation>
</comment>
<comment type="similarity">
    <text evidence="1">Belongs to the SIMIBI class G3E GTPase family. UreG subfamily.</text>
</comment>
<organism>
    <name type="scientific">Leptothrix cholodnii (strain ATCC 51168 / LMG 8142 / SP-6)</name>
    <name type="common">Leptothrix discophora (strain SP-6)</name>
    <dbReference type="NCBI Taxonomy" id="395495"/>
    <lineage>
        <taxon>Bacteria</taxon>
        <taxon>Pseudomonadati</taxon>
        <taxon>Pseudomonadota</taxon>
        <taxon>Betaproteobacteria</taxon>
        <taxon>Burkholderiales</taxon>
        <taxon>Sphaerotilaceae</taxon>
        <taxon>Leptothrix</taxon>
    </lineage>
</organism>
<gene>
    <name evidence="1" type="primary">ureG</name>
    <name type="ordered locus">Lcho_0585</name>
</gene>
<reference key="1">
    <citation type="submission" date="2008-03" db="EMBL/GenBank/DDBJ databases">
        <title>Complete sequence of Leptothrix cholodnii SP-6.</title>
        <authorList>
            <consortium name="US DOE Joint Genome Institute"/>
            <person name="Copeland A."/>
            <person name="Lucas S."/>
            <person name="Lapidus A."/>
            <person name="Glavina del Rio T."/>
            <person name="Dalin E."/>
            <person name="Tice H."/>
            <person name="Bruce D."/>
            <person name="Goodwin L."/>
            <person name="Pitluck S."/>
            <person name="Chertkov O."/>
            <person name="Brettin T."/>
            <person name="Detter J.C."/>
            <person name="Han C."/>
            <person name="Kuske C.R."/>
            <person name="Schmutz J."/>
            <person name="Larimer F."/>
            <person name="Land M."/>
            <person name="Hauser L."/>
            <person name="Kyrpides N."/>
            <person name="Lykidis A."/>
            <person name="Emerson D."/>
            <person name="Richardson P."/>
        </authorList>
    </citation>
    <scope>NUCLEOTIDE SEQUENCE [LARGE SCALE GENOMIC DNA]</scope>
    <source>
        <strain>ATCC 51168 / LMG 8142 / SP-6</strain>
    </source>
</reference>
<name>UREG_LEPCP</name>
<proteinExistence type="inferred from homology"/>
<evidence type="ECO:0000255" key="1">
    <source>
        <dbReference type="HAMAP-Rule" id="MF_01389"/>
    </source>
</evidence>
<evidence type="ECO:0000256" key="2">
    <source>
        <dbReference type="SAM" id="MobiDB-lite"/>
    </source>
</evidence>
<dbReference type="EMBL" id="CP001013">
    <property type="protein sequence ID" value="ACB32860.1"/>
    <property type="molecule type" value="Genomic_DNA"/>
</dbReference>
<dbReference type="RefSeq" id="WP_012345622.1">
    <property type="nucleotide sequence ID" value="NC_010524.1"/>
</dbReference>
<dbReference type="SMR" id="B1XYX6"/>
<dbReference type="STRING" id="395495.Lcho_0585"/>
<dbReference type="KEGG" id="lch:Lcho_0585"/>
<dbReference type="eggNOG" id="COG0378">
    <property type="taxonomic scope" value="Bacteria"/>
</dbReference>
<dbReference type="HOGENOM" id="CLU_072144_1_0_4"/>
<dbReference type="OrthoDB" id="9802035at2"/>
<dbReference type="Proteomes" id="UP000001693">
    <property type="component" value="Chromosome"/>
</dbReference>
<dbReference type="GO" id="GO:0005737">
    <property type="term" value="C:cytoplasm"/>
    <property type="evidence" value="ECO:0007669"/>
    <property type="project" value="UniProtKB-SubCell"/>
</dbReference>
<dbReference type="GO" id="GO:0005525">
    <property type="term" value="F:GTP binding"/>
    <property type="evidence" value="ECO:0007669"/>
    <property type="project" value="UniProtKB-KW"/>
</dbReference>
<dbReference type="GO" id="GO:0003924">
    <property type="term" value="F:GTPase activity"/>
    <property type="evidence" value="ECO:0007669"/>
    <property type="project" value="InterPro"/>
</dbReference>
<dbReference type="GO" id="GO:0016151">
    <property type="term" value="F:nickel cation binding"/>
    <property type="evidence" value="ECO:0007669"/>
    <property type="project" value="UniProtKB-UniRule"/>
</dbReference>
<dbReference type="GO" id="GO:0043419">
    <property type="term" value="P:urea catabolic process"/>
    <property type="evidence" value="ECO:0007669"/>
    <property type="project" value="InterPro"/>
</dbReference>
<dbReference type="CDD" id="cd05540">
    <property type="entry name" value="UreG"/>
    <property type="match status" value="1"/>
</dbReference>
<dbReference type="FunFam" id="3.40.50.300:FF:000208">
    <property type="entry name" value="Urease accessory protein UreG"/>
    <property type="match status" value="1"/>
</dbReference>
<dbReference type="Gene3D" id="3.40.50.300">
    <property type="entry name" value="P-loop containing nucleotide triphosphate hydrolases"/>
    <property type="match status" value="1"/>
</dbReference>
<dbReference type="HAMAP" id="MF_01389">
    <property type="entry name" value="UreG"/>
    <property type="match status" value="1"/>
</dbReference>
<dbReference type="InterPro" id="IPR003495">
    <property type="entry name" value="CobW/HypB/UreG_nucleotide-bd"/>
</dbReference>
<dbReference type="InterPro" id="IPR027417">
    <property type="entry name" value="P-loop_NTPase"/>
</dbReference>
<dbReference type="InterPro" id="IPR004400">
    <property type="entry name" value="UreG"/>
</dbReference>
<dbReference type="NCBIfam" id="TIGR00101">
    <property type="entry name" value="ureG"/>
    <property type="match status" value="1"/>
</dbReference>
<dbReference type="PANTHER" id="PTHR31715">
    <property type="entry name" value="UREASE ACCESSORY PROTEIN G"/>
    <property type="match status" value="1"/>
</dbReference>
<dbReference type="PANTHER" id="PTHR31715:SF0">
    <property type="entry name" value="UREASE ACCESSORY PROTEIN G"/>
    <property type="match status" value="1"/>
</dbReference>
<dbReference type="Pfam" id="PF02492">
    <property type="entry name" value="cobW"/>
    <property type="match status" value="1"/>
</dbReference>
<dbReference type="PIRSF" id="PIRSF005624">
    <property type="entry name" value="Ni-bind_GTPase"/>
    <property type="match status" value="1"/>
</dbReference>
<dbReference type="SUPFAM" id="SSF52540">
    <property type="entry name" value="P-loop containing nucleoside triphosphate hydrolases"/>
    <property type="match status" value="1"/>
</dbReference>
<feature type="chain" id="PRO_0000347398" description="Urease accessory protein UreG">
    <location>
        <begin position="1"/>
        <end position="214"/>
    </location>
</feature>
<feature type="region of interest" description="Disordered" evidence="2">
    <location>
        <begin position="1"/>
        <end position="20"/>
    </location>
</feature>
<feature type="binding site" evidence="1">
    <location>
        <begin position="23"/>
        <end position="30"/>
    </location>
    <ligand>
        <name>GTP</name>
        <dbReference type="ChEBI" id="CHEBI:37565"/>
    </ligand>
</feature>
<sequence length="214" mass="23305">MSQLHAVPGRTKKLPPLRVGVGGPVGSGKTTLVEMLCKTMRERWDLVVVTNDIYTKEDQRLLTVAGALEPERIIGVETGGCPHTAIREDASINLEAVDRMLEKFPNADIVFIESGGDNLAATFSPELSDLTIYVIDVAAGEKIPRKGGPGITKSDLFVINKTDLAPHVGADLSVMEADTRRMRPNRPFVMSNLKTRQGLDEVIRFIETKGLLVG</sequence>
<protein>
    <recommendedName>
        <fullName evidence="1">Urease accessory protein UreG</fullName>
    </recommendedName>
</protein>